<name>RIMP_STAAW</name>
<accession>Q8NWZ3</accession>
<protein>
    <recommendedName>
        <fullName evidence="1">Ribosome maturation factor RimP</fullName>
    </recommendedName>
</protein>
<feature type="chain" id="PRO_0000181924" description="Ribosome maturation factor RimP">
    <location>
        <begin position="1"/>
        <end position="155"/>
    </location>
</feature>
<proteinExistence type="inferred from homology"/>
<evidence type="ECO:0000255" key="1">
    <source>
        <dbReference type="HAMAP-Rule" id="MF_01077"/>
    </source>
</evidence>
<gene>
    <name evidence="1" type="primary">rimP</name>
    <name type="ordered locus">MW1148</name>
</gene>
<keyword id="KW-0963">Cytoplasm</keyword>
<keyword id="KW-0690">Ribosome biogenesis</keyword>
<sequence length="155" mass="17627">MSKITEQVEVIVKPIMEDLNFELVDVEYVKEGRDHFLRISIDKEGGVDLNDCTLASEKISEAMDANDPIPEMYYLDVASPGAERPIKKEQDFQNAITKPVFVSLYVPIEGEKEWLGILQEVNNETIVVQVKIKARTKDIEIPRDKIAKARHAVMI</sequence>
<comment type="function">
    <text evidence="1">Required for maturation of 30S ribosomal subunits.</text>
</comment>
<comment type="subcellular location">
    <subcellularLocation>
        <location evidence="1">Cytoplasm</location>
    </subcellularLocation>
</comment>
<comment type="similarity">
    <text evidence="1">Belongs to the RimP family.</text>
</comment>
<reference key="1">
    <citation type="journal article" date="2002" name="Lancet">
        <title>Genome and virulence determinants of high virulence community-acquired MRSA.</title>
        <authorList>
            <person name="Baba T."/>
            <person name="Takeuchi F."/>
            <person name="Kuroda M."/>
            <person name="Yuzawa H."/>
            <person name="Aoki K."/>
            <person name="Oguchi A."/>
            <person name="Nagai Y."/>
            <person name="Iwama N."/>
            <person name="Asano K."/>
            <person name="Naimi T."/>
            <person name="Kuroda H."/>
            <person name="Cui L."/>
            <person name="Yamamoto K."/>
            <person name="Hiramatsu K."/>
        </authorList>
    </citation>
    <scope>NUCLEOTIDE SEQUENCE [LARGE SCALE GENOMIC DNA]</scope>
    <source>
        <strain>MW2</strain>
    </source>
</reference>
<organism>
    <name type="scientific">Staphylococcus aureus (strain MW2)</name>
    <dbReference type="NCBI Taxonomy" id="196620"/>
    <lineage>
        <taxon>Bacteria</taxon>
        <taxon>Bacillati</taxon>
        <taxon>Bacillota</taxon>
        <taxon>Bacilli</taxon>
        <taxon>Bacillales</taxon>
        <taxon>Staphylococcaceae</taxon>
        <taxon>Staphylococcus</taxon>
    </lineage>
</organism>
<dbReference type="EMBL" id="BA000033">
    <property type="protein sequence ID" value="BAB95013.1"/>
    <property type="molecule type" value="Genomic_DNA"/>
</dbReference>
<dbReference type="RefSeq" id="WP_000036631.1">
    <property type="nucleotide sequence ID" value="NC_003923.1"/>
</dbReference>
<dbReference type="SMR" id="Q8NWZ3"/>
<dbReference type="KEGG" id="sam:MW1148"/>
<dbReference type="HOGENOM" id="CLU_070525_2_0_9"/>
<dbReference type="GO" id="GO:0005829">
    <property type="term" value="C:cytosol"/>
    <property type="evidence" value="ECO:0007669"/>
    <property type="project" value="TreeGrafter"/>
</dbReference>
<dbReference type="GO" id="GO:0000028">
    <property type="term" value="P:ribosomal small subunit assembly"/>
    <property type="evidence" value="ECO:0007669"/>
    <property type="project" value="TreeGrafter"/>
</dbReference>
<dbReference type="GO" id="GO:0006412">
    <property type="term" value="P:translation"/>
    <property type="evidence" value="ECO:0007669"/>
    <property type="project" value="TreeGrafter"/>
</dbReference>
<dbReference type="CDD" id="cd01734">
    <property type="entry name" value="YlxS_C"/>
    <property type="match status" value="1"/>
</dbReference>
<dbReference type="FunFam" id="3.30.300.70:FF:000001">
    <property type="entry name" value="Ribosome maturation factor RimP"/>
    <property type="match status" value="1"/>
</dbReference>
<dbReference type="Gene3D" id="2.30.30.180">
    <property type="entry name" value="Ribosome maturation factor RimP, C-terminal domain"/>
    <property type="match status" value="1"/>
</dbReference>
<dbReference type="Gene3D" id="3.30.300.70">
    <property type="entry name" value="RimP-like superfamily, N-terminal"/>
    <property type="match status" value="1"/>
</dbReference>
<dbReference type="HAMAP" id="MF_01077">
    <property type="entry name" value="RimP"/>
    <property type="match status" value="1"/>
</dbReference>
<dbReference type="InterPro" id="IPR003728">
    <property type="entry name" value="Ribosome_maturation_RimP"/>
</dbReference>
<dbReference type="InterPro" id="IPR028998">
    <property type="entry name" value="RimP_C"/>
</dbReference>
<dbReference type="InterPro" id="IPR036847">
    <property type="entry name" value="RimP_C_sf"/>
</dbReference>
<dbReference type="InterPro" id="IPR028989">
    <property type="entry name" value="RimP_N"/>
</dbReference>
<dbReference type="InterPro" id="IPR035956">
    <property type="entry name" value="RimP_N_sf"/>
</dbReference>
<dbReference type="NCBIfam" id="NF000928">
    <property type="entry name" value="PRK00092.1-2"/>
    <property type="match status" value="1"/>
</dbReference>
<dbReference type="PANTHER" id="PTHR33867">
    <property type="entry name" value="RIBOSOME MATURATION FACTOR RIMP"/>
    <property type="match status" value="1"/>
</dbReference>
<dbReference type="PANTHER" id="PTHR33867:SF1">
    <property type="entry name" value="RIBOSOME MATURATION FACTOR RIMP"/>
    <property type="match status" value="1"/>
</dbReference>
<dbReference type="Pfam" id="PF17384">
    <property type="entry name" value="DUF150_C"/>
    <property type="match status" value="1"/>
</dbReference>
<dbReference type="Pfam" id="PF02576">
    <property type="entry name" value="RimP_N"/>
    <property type="match status" value="1"/>
</dbReference>
<dbReference type="SUPFAM" id="SSF74942">
    <property type="entry name" value="YhbC-like, C-terminal domain"/>
    <property type="match status" value="1"/>
</dbReference>
<dbReference type="SUPFAM" id="SSF75420">
    <property type="entry name" value="YhbC-like, N-terminal domain"/>
    <property type="match status" value="1"/>
</dbReference>